<proteinExistence type="inferred from homology"/>
<sequence>MSISNQLFDRAQAIIPGGVNSPARAFNGVGGDPLFIEKAQGAYIYDVDKKSYIDYVGSWGPMILGHNHPEIKAAVIAAVENGLSFGAPTEIEIIMAEKVKSLVPSMEQVRMVSSGTEATMSAIRLARGYTGRDKILKFEGNYHGHSDSLLVKAGSGALTLGQPSSPGIPADFAKHTLTATYNDLASVQQLFTEYKDQIACIIVEPVAGNMNCILPQEGFLQGLREICDANDALLILDEVMTGFRVALGGAQAYYDIKPDLTTLGKVIGGGMPVGAFGGSKKVMQHIAPTGPVYQAGTLSGNPIAMHAGLAALTALDRPEYAQLAEKTKKLALGLKRVAKEENVPLAINYAGGMFGFFFTEAEQVSNYTQACACDIEKFKKFFHLMLEQGIYLAPSAFEAGFLSLAHSDQDIEDTLTAAKKAFSML</sequence>
<feature type="chain" id="PRO_0000300939" description="Glutamate-1-semialdehyde 2,1-aminomutase">
    <location>
        <begin position="1"/>
        <end position="425"/>
    </location>
</feature>
<feature type="modified residue" description="N6-(pyridoxal phosphate)lysine" evidence="1">
    <location>
        <position position="265"/>
    </location>
</feature>
<name>GSA_PSYIN</name>
<keyword id="KW-0963">Cytoplasm</keyword>
<keyword id="KW-0413">Isomerase</keyword>
<keyword id="KW-0627">Porphyrin biosynthesis</keyword>
<keyword id="KW-0663">Pyridoxal phosphate</keyword>
<keyword id="KW-1185">Reference proteome</keyword>
<accession>A1ST92</accession>
<comment type="catalytic activity">
    <reaction evidence="1">
        <text>(S)-4-amino-5-oxopentanoate = 5-aminolevulinate</text>
        <dbReference type="Rhea" id="RHEA:14265"/>
        <dbReference type="ChEBI" id="CHEBI:57501"/>
        <dbReference type="ChEBI" id="CHEBI:356416"/>
        <dbReference type="EC" id="5.4.3.8"/>
    </reaction>
</comment>
<comment type="cofactor">
    <cofactor evidence="1">
        <name>pyridoxal 5'-phosphate</name>
        <dbReference type="ChEBI" id="CHEBI:597326"/>
    </cofactor>
</comment>
<comment type="pathway">
    <text evidence="1">Porphyrin-containing compound metabolism; protoporphyrin-IX biosynthesis; 5-aminolevulinate from L-glutamyl-tRNA(Glu): step 2/2.</text>
</comment>
<comment type="subunit">
    <text evidence="1">Homodimer.</text>
</comment>
<comment type="subcellular location">
    <subcellularLocation>
        <location evidence="1">Cytoplasm</location>
    </subcellularLocation>
</comment>
<comment type="similarity">
    <text evidence="1">Belongs to the class-III pyridoxal-phosphate-dependent aminotransferase family. HemL subfamily.</text>
</comment>
<gene>
    <name evidence="1" type="primary">hemL</name>
    <name type="ordered locus">Ping_0865</name>
</gene>
<organism>
    <name type="scientific">Psychromonas ingrahamii (strain DSM 17664 / CCUG 51855 / 37)</name>
    <dbReference type="NCBI Taxonomy" id="357804"/>
    <lineage>
        <taxon>Bacteria</taxon>
        <taxon>Pseudomonadati</taxon>
        <taxon>Pseudomonadota</taxon>
        <taxon>Gammaproteobacteria</taxon>
        <taxon>Alteromonadales</taxon>
        <taxon>Psychromonadaceae</taxon>
        <taxon>Psychromonas</taxon>
    </lineage>
</organism>
<dbReference type="EC" id="5.4.3.8" evidence="1"/>
<dbReference type="EMBL" id="CP000510">
    <property type="protein sequence ID" value="ABM02707.1"/>
    <property type="molecule type" value="Genomic_DNA"/>
</dbReference>
<dbReference type="RefSeq" id="WP_011769270.1">
    <property type="nucleotide sequence ID" value="NC_008709.1"/>
</dbReference>
<dbReference type="SMR" id="A1ST92"/>
<dbReference type="STRING" id="357804.Ping_0865"/>
<dbReference type="KEGG" id="pin:Ping_0865"/>
<dbReference type="eggNOG" id="COG0001">
    <property type="taxonomic scope" value="Bacteria"/>
</dbReference>
<dbReference type="HOGENOM" id="CLU_016922_1_5_6"/>
<dbReference type="OrthoDB" id="9801052at2"/>
<dbReference type="UniPathway" id="UPA00251">
    <property type="reaction ID" value="UER00317"/>
</dbReference>
<dbReference type="Proteomes" id="UP000000639">
    <property type="component" value="Chromosome"/>
</dbReference>
<dbReference type="GO" id="GO:0005737">
    <property type="term" value="C:cytoplasm"/>
    <property type="evidence" value="ECO:0007669"/>
    <property type="project" value="UniProtKB-SubCell"/>
</dbReference>
<dbReference type="GO" id="GO:0042286">
    <property type="term" value="F:glutamate-1-semialdehyde 2,1-aminomutase activity"/>
    <property type="evidence" value="ECO:0007669"/>
    <property type="project" value="UniProtKB-UniRule"/>
</dbReference>
<dbReference type="GO" id="GO:0030170">
    <property type="term" value="F:pyridoxal phosphate binding"/>
    <property type="evidence" value="ECO:0007669"/>
    <property type="project" value="InterPro"/>
</dbReference>
<dbReference type="GO" id="GO:0008483">
    <property type="term" value="F:transaminase activity"/>
    <property type="evidence" value="ECO:0007669"/>
    <property type="project" value="InterPro"/>
</dbReference>
<dbReference type="GO" id="GO:0006782">
    <property type="term" value="P:protoporphyrinogen IX biosynthetic process"/>
    <property type="evidence" value="ECO:0007669"/>
    <property type="project" value="UniProtKB-UniRule"/>
</dbReference>
<dbReference type="CDD" id="cd00610">
    <property type="entry name" value="OAT_like"/>
    <property type="match status" value="1"/>
</dbReference>
<dbReference type="FunFam" id="3.40.640.10:FF:000021">
    <property type="entry name" value="Glutamate-1-semialdehyde 2,1-aminomutase"/>
    <property type="match status" value="1"/>
</dbReference>
<dbReference type="Gene3D" id="3.90.1150.10">
    <property type="entry name" value="Aspartate Aminotransferase, domain 1"/>
    <property type="match status" value="1"/>
</dbReference>
<dbReference type="Gene3D" id="3.40.640.10">
    <property type="entry name" value="Type I PLP-dependent aspartate aminotransferase-like (Major domain)"/>
    <property type="match status" value="1"/>
</dbReference>
<dbReference type="HAMAP" id="MF_00375">
    <property type="entry name" value="HemL_aminotrans_3"/>
    <property type="match status" value="1"/>
</dbReference>
<dbReference type="InterPro" id="IPR004639">
    <property type="entry name" value="4pyrrol_synth_GluAld_NH2Trfase"/>
</dbReference>
<dbReference type="InterPro" id="IPR005814">
    <property type="entry name" value="Aminotrans_3"/>
</dbReference>
<dbReference type="InterPro" id="IPR049704">
    <property type="entry name" value="Aminotrans_3_PPA_site"/>
</dbReference>
<dbReference type="InterPro" id="IPR015424">
    <property type="entry name" value="PyrdxlP-dep_Trfase"/>
</dbReference>
<dbReference type="InterPro" id="IPR015421">
    <property type="entry name" value="PyrdxlP-dep_Trfase_major"/>
</dbReference>
<dbReference type="InterPro" id="IPR015422">
    <property type="entry name" value="PyrdxlP-dep_Trfase_small"/>
</dbReference>
<dbReference type="NCBIfam" id="TIGR00713">
    <property type="entry name" value="hemL"/>
    <property type="match status" value="1"/>
</dbReference>
<dbReference type="NCBIfam" id="NF000818">
    <property type="entry name" value="PRK00062.1"/>
    <property type="match status" value="1"/>
</dbReference>
<dbReference type="PANTHER" id="PTHR43713">
    <property type="entry name" value="GLUTAMATE-1-SEMIALDEHYDE 2,1-AMINOMUTASE"/>
    <property type="match status" value="1"/>
</dbReference>
<dbReference type="PANTHER" id="PTHR43713:SF3">
    <property type="entry name" value="GLUTAMATE-1-SEMIALDEHYDE 2,1-AMINOMUTASE 1, CHLOROPLASTIC-RELATED"/>
    <property type="match status" value="1"/>
</dbReference>
<dbReference type="Pfam" id="PF00202">
    <property type="entry name" value="Aminotran_3"/>
    <property type="match status" value="1"/>
</dbReference>
<dbReference type="SUPFAM" id="SSF53383">
    <property type="entry name" value="PLP-dependent transferases"/>
    <property type="match status" value="1"/>
</dbReference>
<dbReference type="PROSITE" id="PS00600">
    <property type="entry name" value="AA_TRANSFER_CLASS_3"/>
    <property type="match status" value="1"/>
</dbReference>
<reference key="1">
    <citation type="journal article" date="2008" name="BMC Genomics">
        <title>Genomics of an extreme psychrophile, Psychromonas ingrahamii.</title>
        <authorList>
            <person name="Riley M."/>
            <person name="Staley J.T."/>
            <person name="Danchin A."/>
            <person name="Wang T.Z."/>
            <person name="Brettin T.S."/>
            <person name="Hauser L.J."/>
            <person name="Land M.L."/>
            <person name="Thompson L.S."/>
        </authorList>
    </citation>
    <scope>NUCLEOTIDE SEQUENCE [LARGE SCALE GENOMIC DNA]</scope>
    <source>
        <strain>DSM 17664 / CCUG 51855 / 37</strain>
    </source>
</reference>
<evidence type="ECO:0000255" key="1">
    <source>
        <dbReference type="HAMAP-Rule" id="MF_00375"/>
    </source>
</evidence>
<protein>
    <recommendedName>
        <fullName evidence="1">Glutamate-1-semialdehyde 2,1-aminomutase</fullName>
        <shortName evidence="1">GSA</shortName>
        <ecNumber evidence="1">5.4.3.8</ecNumber>
    </recommendedName>
    <alternativeName>
        <fullName evidence="1">Glutamate-1-semialdehyde aminotransferase</fullName>
        <shortName evidence="1">GSA-AT</shortName>
    </alternativeName>
</protein>